<dbReference type="EMBL" id="CP000360">
    <property type="protein sequence ID" value="ABF43683.1"/>
    <property type="molecule type" value="Genomic_DNA"/>
</dbReference>
<dbReference type="RefSeq" id="WP_011525480.1">
    <property type="nucleotide sequence ID" value="NC_008009.1"/>
</dbReference>
<dbReference type="SMR" id="Q1IHG7"/>
<dbReference type="STRING" id="204669.Acid345_4683"/>
<dbReference type="EnsemblBacteria" id="ABF43683">
    <property type="protein sequence ID" value="ABF43683"/>
    <property type="gene ID" value="Acid345_4683"/>
</dbReference>
<dbReference type="KEGG" id="aba:Acid345_4683"/>
<dbReference type="eggNOG" id="COG0267">
    <property type="taxonomic scope" value="Bacteria"/>
</dbReference>
<dbReference type="HOGENOM" id="CLU_190949_0_2_0"/>
<dbReference type="Proteomes" id="UP000002432">
    <property type="component" value="Chromosome"/>
</dbReference>
<dbReference type="GO" id="GO:0005737">
    <property type="term" value="C:cytoplasm"/>
    <property type="evidence" value="ECO:0007669"/>
    <property type="project" value="UniProtKB-ARBA"/>
</dbReference>
<dbReference type="GO" id="GO:1990904">
    <property type="term" value="C:ribonucleoprotein complex"/>
    <property type="evidence" value="ECO:0007669"/>
    <property type="project" value="UniProtKB-KW"/>
</dbReference>
<dbReference type="GO" id="GO:0005840">
    <property type="term" value="C:ribosome"/>
    <property type="evidence" value="ECO:0007669"/>
    <property type="project" value="UniProtKB-KW"/>
</dbReference>
<dbReference type="GO" id="GO:0003735">
    <property type="term" value="F:structural constituent of ribosome"/>
    <property type="evidence" value="ECO:0007669"/>
    <property type="project" value="InterPro"/>
</dbReference>
<dbReference type="GO" id="GO:0006412">
    <property type="term" value="P:translation"/>
    <property type="evidence" value="ECO:0007669"/>
    <property type="project" value="UniProtKB-UniRule"/>
</dbReference>
<dbReference type="Gene3D" id="2.20.28.120">
    <property type="entry name" value="Ribosomal protein L33"/>
    <property type="match status" value="1"/>
</dbReference>
<dbReference type="HAMAP" id="MF_00294">
    <property type="entry name" value="Ribosomal_bL33"/>
    <property type="match status" value="1"/>
</dbReference>
<dbReference type="InterPro" id="IPR001705">
    <property type="entry name" value="Ribosomal_bL33"/>
</dbReference>
<dbReference type="InterPro" id="IPR018264">
    <property type="entry name" value="Ribosomal_bL33_CS"/>
</dbReference>
<dbReference type="InterPro" id="IPR038584">
    <property type="entry name" value="Ribosomal_bL33_sf"/>
</dbReference>
<dbReference type="InterPro" id="IPR011332">
    <property type="entry name" value="Ribosomal_zn-bd"/>
</dbReference>
<dbReference type="NCBIfam" id="NF001764">
    <property type="entry name" value="PRK00504.1"/>
    <property type="match status" value="1"/>
</dbReference>
<dbReference type="NCBIfam" id="NF001860">
    <property type="entry name" value="PRK00595.1"/>
    <property type="match status" value="1"/>
</dbReference>
<dbReference type="NCBIfam" id="TIGR01023">
    <property type="entry name" value="rpmG_bact"/>
    <property type="match status" value="1"/>
</dbReference>
<dbReference type="PANTHER" id="PTHR43168">
    <property type="entry name" value="50S RIBOSOMAL PROTEIN L33, CHLOROPLASTIC"/>
    <property type="match status" value="1"/>
</dbReference>
<dbReference type="PANTHER" id="PTHR43168:SF2">
    <property type="entry name" value="LARGE RIBOSOMAL SUBUNIT PROTEIN BL33C"/>
    <property type="match status" value="1"/>
</dbReference>
<dbReference type="Pfam" id="PF00471">
    <property type="entry name" value="Ribosomal_L33"/>
    <property type="match status" value="1"/>
</dbReference>
<dbReference type="SUPFAM" id="SSF57829">
    <property type="entry name" value="Zn-binding ribosomal proteins"/>
    <property type="match status" value="1"/>
</dbReference>
<dbReference type="PROSITE" id="PS00582">
    <property type="entry name" value="RIBOSOMAL_L33"/>
    <property type="match status" value="1"/>
</dbReference>
<protein>
    <recommendedName>
        <fullName evidence="1">Large ribosomal subunit protein bL33</fullName>
    </recommendedName>
    <alternativeName>
        <fullName evidence="2">50S ribosomal protein L33</fullName>
    </alternativeName>
</protein>
<comment type="similarity">
    <text evidence="1">Belongs to the bacterial ribosomal protein bL33 family.</text>
</comment>
<proteinExistence type="inferred from homology"/>
<evidence type="ECO:0000255" key="1">
    <source>
        <dbReference type="HAMAP-Rule" id="MF_00294"/>
    </source>
</evidence>
<evidence type="ECO:0000305" key="2"/>
<reference key="1">
    <citation type="journal article" date="2009" name="Appl. Environ. Microbiol.">
        <title>Three genomes from the phylum Acidobacteria provide insight into the lifestyles of these microorganisms in soils.</title>
        <authorList>
            <person name="Ward N.L."/>
            <person name="Challacombe J.F."/>
            <person name="Janssen P.H."/>
            <person name="Henrissat B."/>
            <person name="Coutinho P.M."/>
            <person name="Wu M."/>
            <person name="Xie G."/>
            <person name="Haft D.H."/>
            <person name="Sait M."/>
            <person name="Badger J."/>
            <person name="Barabote R.D."/>
            <person name="Bradley B."/>
            <person name="Brettin T.S."/>
            <person name="Brinkac L.M."/>
            <person name="Bruce D."/>
            <person name="Creasy T."/>
            <person name="Daugherty S.C."/>
            <person name="Davidsen T.M."/>
            <person name="DeBoy R.T."/>
            <person name="Detter J.C."/>
            <person name="Dodson R.J."/>
            <person name="Durkin A.S."/>
            <person name="Ganapathy A."/>
            <person name="Gwinn-Giglio M."/>
            <person name="Han C.S."/>
            <person name="Khouri H."/>
            <person name="Kiss H."/>
            <person name="Kothari S.P."/>
            <person name="Madupu R."/>
            <person name="Nelson K.E."/>
            <person name="Nelson W.C."/>
            <person name="Paulsen I."/>
            <person name="Penn K."/>
            <person name="Ren Q."/>
            <person name="Rosovitz M.J."/>
            <person name="Selengut J.D."/>
            <person name="Shrivastava S."/>
            <person name="Sullivan S.A."/>
            <person name="Tapia R."/>
            <person name="Thompson L.S."/>
            <person name="Watkins K.L."/>
            <person name="Yang Q."/>
            <person name="Yu C."/>
            <person name="Zafar N."/>
            <person name="Zhou L."/>
            <person name="Kuske C.R."/>
        </authorList>
    </citation>
    <scope>NUCLEOTIDE SEQUENCE [LARGE SCALE GENOMIC DNA]</scope>
    <source>
        <strain>Ellin345</strain>
    </source>
</reference>
<sequence length="50" mass="5933">MPREIIQLQCGDCKDKNYSTTKNKKTTTGRLEFSKFCRKCRKHTSHKEVK</sequence>
<organism>
    <name type="scientific">Koribacter versatilis (strain Ellin345)</name>
    <dbReference type="NCBI Taxonomy" id="204669"/>
    <lineage>
        <taxon>Bacteria</taxon>
        <taxon>Pseudomonadati</taxon>
        <taxon>Acidobacteriota</taxon>
        <taxon>Terriglobia</taxon>
        <taxon>Terriglobales</taxon>
        <taxon>Candidatus Korobacteraceae</taxon>
        <taxon>Candidatus Korobacter</taxon>
    </lineage>
</organism>
<feature type="chain" id="PRO_0000356360" description="Large ribosomal subunit protein bL33">
    <location>
        <begin position="1"/>
        <end position="50"/>
    </location>
</feature>
<gene>
    <name evidence="1" type="primary">rpmG</name>
    <name type="ordered locus">Acid345_4683</name>
</gene>
<name>RL33_KORVE</name>
<accession>Q1IHG7</accession>
<keyword id="KW-1185">Reference proteome</keyword>
<keyword id="KW-0687">Ribonucleoprotein</keyword>
<keyword id="KW-0689">Ribosomal protein</keyword>